<evidence type="ECO:0000250" key="1">
    <source>
        <dbReference type="UniProtKB" id="Q9BYX4"/>
    </source>
</evidence>
<evidence type="ECO:0000255" key="2">
    <source>
        <dbReference type="PROSITE-ProRule" id="PRU00541"/>
    </source>
</evidence>
<evidence type="ECO:0000255" key="3">
    <source>
        <dbReference type="PROSITE-ProRule" id="PRU00542"/>
    </source>
</evidence>
<evidence type="ECO:0000255" key="4">
    <source>
        <dbReference type="PROSITE-ProRule" id="PRU01125"/>
    </source>
</evidence>
<evidence type="ECO:0000256" key="5">
    <source>
        <dbReference type="SAM" id="MobiDB-lite"/>
    </source>
</evidence>
<evidence type="ECO:0000269" key="6">
    <source>
    </source>
</evidence>
<evidence type="ECO:0000269" key="7">
    <source>
    </source>
</evidence>
<evidence type="ECO:0000269" key="8">
    <source>
    </source>
</evidence>
<evidence type="ECO:0000269" key="9">
    <source>
    </source>
</evidence>
<evidence type="ECO:0000269" key="10">
    <source>
    </source>
</evidence>
<evidence type="ECO:0000303" key="11">
    <source>
    </source>
</evidence>
<evidence type="ECO:0000305" key="12"/>
<evidence type="ECO:0000312" key="13">
    <source>
        <dbReference type="MGI" id="MGI:1918836"/>
    </source>
</evidence>
<evidence type="ECO:0007744" key="14">
    <source>
    </source>
</evidence>
<evidence type="ECO:0007744" key="15">
    <source>
    </source>
</evidence>
<evidence type="ECO:0007829" key="16">
    <source>
        <dbReference type="PDB" id="3TS9"/>
    </source>
</evidence>
<evidence type="ECO:0007829" key="17">
    <source>
        <dbReference type="PDB" id="7BKP"/>
    </source>
</evidence>
<evidence type="ECO:0007829" key="18">
    <source>
        <dbReference type="PDB" id="7BKQ"/>
    </source>
</evidence>
<comment type="function">
    <text evidence="6 7 8 9 10">Innate immune receptor which acts as a cytoplasmic sensor of viral nucleic acids and plays a major role in sensing viral infection and in the activation of a cascade of antiviral responses including the induction of type I interferons and pro-inflammatory cytokines. Its ligands include mRNA lacking 2'-O-methylation at their 5' cap and long-dsRNA (&gt;1 kb in length). Upon ligand binding it associates with mitochondria antiviral signaling protein (MAVS/IPS1) which activates the IKK-related kinases: TBK1 and IKBKE which phosphorylate interferon regulatory factors: IRF3 and IRF7 which in turn activate transcription of antiviral immunological genes, including interferons (IFNs); IFN-alpha and IFN-beta. Responsible for detecting the Picornaviridae family members such as encephalomyocarditis virus (EMCV), mengo encephalomyocarditis virus (ENMG), and theiler's murine encephalomyelitis virus (TMEV). Can also detect other viruses such as dengue virus (DENV), west Nile virus (WNV), and reovirus. Also involved in antiviral signaling in response to viruses containing a dsDNA genome, such as vaccinia virus. Plays an important role in amplifying innate immune signaling through recognition of RNA metabolites that are produced during virus infection by ribonuclease L (RNase L). May play an important role in enhancing natural killer cell function and may be involved in growth inhibition and apoptosis in several tumor cell lines.</text>
</comment>
<comment type="catalytic activity">
    <reaction evidence="1">
        <text>ATP + H2O = ADP + phosphate + H(+)</text>
        <dbReference type="Rhea" id="RHEA:13065"/>
        <dbReference type="ChEBI" id="CHEBI:15377"/>
        <dbReference type="ChEBI" id="CHEBI:15378"/>
        <dbReference type="ChEBI" id="CHEBI:30616"/>
        <dbReference type="ChEBI" id="CHEBI:43474"/>
        <dbReference type="ChEBI" id="CHEBI:456216"/>
        <dbReference type="EC" id="3.6.4.13"/>
    </reaction>
    <physiologicalReaction direction="left-to-right" evidence="1">
        <dbReference type="Rhea" id="RHEA:13066"/>
    </physiologicalReaction>
</comment>
<comment type="subunit">
    <text evidence="1">Monomer in the absence of ligands and homodimerizes in the presence of dsRNA ligands. Can assemble into helical or linear polymeric filaments on long dsRNA. Interacts with MAVS/IPS1. Interacts (via the CARD domains) with TKFC, the interaction is inhibited by viral infection. Interacts with PCBP2. Interacts with NLRC5. Interacts with PIAS2-beta. Interacts with DDX60. Interacts with ANKRD17. Interacts with IKBKE. Interacts with ATG5 and ATG12, either as ATG5 and ATG12 monomers or as ATG12-ATG5 conjugates. Interacts with ZCCHC3; leading to activate IFIH1/MDA5. Interacts with RNF123. Interacts with DDX3X. Interacts with NOD1; this interaction promotes transcription of antiviral genes and inhibition of viral replication. Interacts with ECSIT; this interaction bridges IFIH1 to the MAVS complex at the mitochondrion.</text>
</comment>
<comment type="interaction">
    <interactant intactId="EBI-16019291">
        <id>Q8R5F7-1</id>
    </interactant>
    <interactant intactId="EBI-6148694">
        <id>P11207</id>
        <label>P/V</label>
    </interactant>
    <organismsDiffer>true</organismsDiffer>
    <experiments>3</experiments>
</comment>
<comment type="subcellular location">
    <subcellularLocation>
        <location evidence="6">Cytoplasm</location>
    </subcellularLocation>
    <subcellularLocation>
        <location evidence="1">Nucleus</location>
    </subcellularLocation>
    <subcellularLocation>
        <location evidence="1">Mitochondrion</location>
    </subcellularLocation>
    <text evidence="1">Upon viral RNA stimulation and ISGylation, translocates from cytosol to mitochondrion. May be found in the nucleus, during apoptosis.</text>
</comment>
<comment type="alternative products">
    <event type="alternative splicing"/>
    <isoform>
        <id>Q8R5F7-1</id>
        <name>1</name>
        <sequence type="displayed"/>
    </isoform>
    <isoform>
        <id>Q8R5F7-2</id>
        <name>2</name>
        <sequence type="described" ref="VSP_013339"/>
    </isoform>
</comment>
<comment type="tissue specificity">
    <text evidence="6">Expression is prominent in lung, liver, kidney, heart and spleen (at protein level). Widely expressed at low level.</text>
</comment>
<comment type="induction">
    <text>By interferon (IFN).</text>
</comment>
<comment type="PTM">
    <text evidence="6">During apoptosis, processed into 3 cleavage products. The helicase-containing fragment, once liberated from the CARD domains, translocate from the cytoplasm to the nucleus. The processed protein significantly sensitizes cells to DNA degradation.</text>
</comment>
<comment type="PTM">
    <text evidence="1">Sumoylated. Sumoylation positively regulates its role in type I interferon induction and is enhanced by PIAS2-beta.</text>
</comment>
<comment type="PTM">
    <text evidence="1">Ubiquitinated by RNF125, leading to its degradation by the proteasome. USP17/UPS17L2-dependent deubiquitination positively regulates the receptor. Ubiquitinated by TRIM25 via 'Lys-63'-linked ubiquitination, promoting activation of IFIH1/MDA5. Ubiquitinated by TRIM40 via 'Lys-48'-linked ubiquitination; leading to proteasomal degradation. Ubiquitinated by TRIM65 via 'Lys-63'-linked ubiquitination, promoting activation of IFIH1/MDA5.</text>
</comment>
<comment type="PTM">
    <text evidence="1">ISGylated by ISG15. ISGylation increases upon infection with viruses. ISGylation at Lys-23 and Lys-43 is dependent of dephosphorylation, regulates mitochondrial translocation and oligomerization. Essential for IFIH1/MDA5-mediated cytokine responses and restriction of virus replication.</text>
</comment>
<comment type="PTM">
    <text evidence="1">Phosphorylated. Dephosphorylated by phsophatases PP1; dephosphorylation precedes and is required for ISGylation.</text>
</comment>
<comment type="similarity">
    <text evidence="12">Belongs to the helicase family. RLR subfamily.</text>
</comment>
<comment type="sequence caution" evidence="12">
    <conflict type="erroneous initiation">
        <sequence resource="EMBL-CDS" id="AAH25508"/>
    </conflict>
    <text>Truncated N-terminus.</text>
</comment>
<organism>
    <name type="scientific">Mus musculus</name>
    <name type="common">Mouse</name>
    <dbReference type="NCBI Taxonomy" id="10090"/>
    <lineage>
        <taxon>Eukaryota</taxon>
        <taxon>Metazoa</taxon>
        <taxon>Chordata</taxon>
        <taxon>Craniata</taxon>
        <taxon>Vertebrata</taxon>
        <taxon>Euteleostomi</taxon>
        <taxon>Mammalia</taxon>
        <taxon>Eutheria</taxon>
        <taxon>Euarchontoglires</taxon>
        <taxon>Glires</taxon>
        <taxon>Rodentia</taxon>
        <taxon>Myomorpha</taxon>
        <taxon>Muroidea</taxon>
        <taxon>Muridae</taxon>
        <taxon>Murinae</taxon>
        <taxon>Mus</taxon>
        <taxon>Mus</taxon>
    </lineage>
</organism>
<reference key="1">
    <citation type="journal article" date="2002" name="Curr. Biol.">
        <title>Overexpression of Helicard, a CARD-containing helicase cleaved during apoptosis, accelerates DNA degradation.</title>
        <authorList>
            <person name="Kovacsovics M."/>
            <person name="Martinon F."/>
            <person name="Micheau O."/>
            <person name="Bodmer J.-L."/>
            <person name="Hofmann K."/>
            <person name="Tschopp J."/>
        </authorList>
    </citation>
    <scope>NUCLEOTIDE SEQUENCE [MRNA] (ISOFORM 1)</scope>
    <scope>FUNCTION</scope>
    <scope>CLEAVAGE SITES</scope>
    <scope>SUBCELLULAR LOCATION</scope>
    <scope>TISSUE SPECIFICITY</scope>
</reference>
<reference key="2">
    <citation type="journal article" date="2002" name="Curr. Biol.">
        <authorList>
            <person name="Kovacsovics M."/>
            <person name="Martinon F."/>
            <person name="Micheau O."/>
            <person name="Bodmer J.-L."/>
            <person name="Hofmann K."/>
            <person name="Tschopp J."/>
        </authorList>
    </citation>
    <scope>ERRATUM OF PUBMED:12015121</scope>
</reference>
<reference key="3">
    <citation type="journal article" date="2002" name="Proc. Natl. Acad. Sci. U.S.A.">
        <title>mda-5: an interferon-inducible putative RNA helicase with double-stranded RNA-dependent ATPase activity and melanoma growth-suppressive properties.</title>
        <authorList>
            <person name="Kang D.-C."/>
            <person name="Gopalkrishnan R.V."/>
            <person name="Wu Q."/>
            <person name="Jankowsky E."/>
            <person name="Pyle A.M."/>
            <person name="Fisher P.B."/>
        </authorList>
    </citation>
    <scope>NUCLEOTIDE SEQUENCE [MRNA] (ISOFORM 1)</scope>
</reference>
<reference key="4">
    <citation type="journal article" date="2005" name="Science">
        <title>The transcriptional landscape of the mammalian genome.</title>
        <authorList>
            <person name="Carninci P."/>
            <person name="Kasukawa T."/>
            <person name="Katayama S."/>
            <person name="Gough J."/>
            <person name="Frith M.C."/>
            <person name="Maeda N."/>
            <person name="Oyama R."/>
            <person name="Ravasi T."/>
            <person name="Lenhard B."/>
            <person name="Wells C."/>
            <person name="Kodzius R."/>
            <person name="Shimokawa K."/>
            <person name="Bajic V.B."/>
            <person name="Brenner S.E."/>
            <person name="Batalov S."/>
            <person name="Forrest A.R."/>
            <person name="Zavolan M."/>
            <person name="Davis M.J."/>
            <person name="Wilming L.G."/>
            <person name="Aidinis V."/>
            <person name="Allen J.E."/>
            <person name="Ambesi-Impiombato A."/>
            <person name="Apweiler R."/>
            <person name="Aturaliya R.N."/>
            <person name="Bailey T.L."/>
            <person name="Bansal M."/>
            <person name="Baxter L."/>
            <person name="Beisel K.W."/>
            <person name="Bersano T."/>
            <person name="Bono H."/>
            <person name="Chalk A.M."/>
            <person name="Chiu K.P."/>
            <person name="Choudhary V."/>
            <person name="Christoffels A."/>
            <person name="Clutterbuck D.R."/>
            <person name="Crowe M.L."/>
            <person name="Dalla E."/>
            <person name="Dalrymple B.P."/>
            <person name="de Bono B."/>
            <person name="Della Gatta G."/>
            <person name="di Bernardo D."/>
            <person name="Down T."/>
            <person name="Engstrom P."/>
            <person name="Fagiolini M."/>
            <person name="Faulkner G."/>
            <person name="Fletcher C.F."/>
            <person name="Fukushima T."/>
            <person name="Furuno M."/>
            <person name="Futaki S."/>
            <person name="Gariboldi M."/>
            <person name="Georgii-Hemming P."/>
            <person name="Gingeras T.R."/>
            <person name="Gojobori T."/>
            <person name="Green R.E."/>
            <person name="Gustincich S."/>
            <person name="Harbers M."/>
            <person name="Hayashi Y."/>
            <person name="Hensch T.K."/>
            <person name="Hirokawa N."/>
            <person name="Hill D."/>
            <person name="Huminiecki L."/>
            <person name="Iacono M."/>
            <person name="Ikeo K."/>
            <person name="Iwama A."/>
            <person name="Ishikawa T."/>
            <person name="Jakt M."/>
            <person name="Kanapin A."/>
            <person name="Katoh M."/>
            <person name="Kawasawa Y."/>
            <person name="Kelso J."/>
            <person name="Kitamura H."/>
            <person name="Kitano H."/>
            <person name="Kollias G."/>
            <person name="Krishnan S.P."/>
            <person name="Kruger A."/>
            <person name="Kummerfeld S.K."/>
            <person name="Kurochkin I.V."/>
            <person name="Lareau L.F."/>
            <person name="Lazarevic D."/>
            <person name="Lipovich L."/>
            <person name="Liu J."/>
            <person name="Liuni S."/>
            <person name="McWilliam S."/>
            <person name="Madan Babu M."/>
            <person name="Madera M."/>
            <person name="Marchionni L."/>
            <person name="Matsuda H."/>
            <person name="Matsuzawa S."/>
            <person name="Miki H."/>
            <person name="Mignone F."/>
            <person name="Miyake S."/>
            <person name="Morris K."/>
            <person name="Mottagui-Tabar S."/>
            <person name="Mulder N."/>
            <person name="Nakano N."/>
            <person name="Nakauchi H."/>
            <person name="Ng P."/>
            <person name="Nilsson R."/>
            <person name="Nishiguchi S."/>
            <person name="Nishikawa S."/>
            <person name="Nori F."/>
            <person name="Ohara O."/>
            <person name="Okazaki Y."/>
            <person name="Orlando V."/>
            <person name="Pang K.C."/>
            <person name="Pavan W.J."/>
            <person name="Pavesi G."/>
            <person name="Pesole G."/>
            <person name="Petrovsky N."/>
            <person name="Piazza S."/>
            <person name="Reed J."/>
            <person name="Reid J.F."/>
            <person name="Ring B.Z."/>
            <person name="Ringwald M."/>
            <person name="Rost B."/>
            <person name="Ruan Y."/>
            <person name="Salzberg S.L."/>
            <person name="Sandelin A."/>
            <person name="Schneider C."/>
            <person name="Schoenbach C."/>
            <person name="Sekiguchi K."/>
            <person name="Semple C.A."/>
            <person name="Seno S."/>
            <person name="Sessa L."/>
            <person name="Sheng Y."/>
            <person name="Shibata Y."/>
            <person name="Shimada H."/>
            <person name="Shimada K."/>
            <person name="Silva D."/>
            <person name="Sinclair B."/>
            <person name="Sperling S."/>
            <person name="Stupka E."/>
            <person name="Sugiura K."/>
            <person name="Sultana R."/>
            <person name="Takenaka Y."/>
            <person name="Taki K."/>
            <person name="Tammoja K."/>
            <person name="Tan S.L."/>
            <person name="Tang S."/>
            <person name="Taylor M.S."/>
            <person name="Tegner J."/>
            <person name="Teichmann S.A."/>
            <person name="Ueda H.R."/>
            <person name="van Nimwegen E."/>
            <person name="Verardo R."/>
            <person name="Wei C.L."/>
            <person name="Yagi K."/>
            <person name="Yamanishi H."/>
            <person name="Zabarovsky E."/>
            <person name="Zhu S."/>
            <person name="Zimmer A."/>
            <person name="Hide W."/>
            <person name="Bult C."/>
            <person name="Grimmond S.M."/>
            <person name="Teasdale R.D."/>
            <person name="Liu E.T."/>
            <person name="Brusic V."/>
            <person name="Quackenbush J."/>
            <person name="Wahlestedt C."/>
            <person name="Mattick J.S."/>
            <person name="Hume D.A."/>
            <person name="Kai C."/>
            <person name="Sasaki D."/>
            <person name="Tomaru Y."/>
            <person name="Fukuda S."/>
            <person name="Kanamori-Katayama M."/>
            <person name="Suzuki M."/>
            <person name="Aoki J."/>
            <person name="Arakawa T."/>
            <person name="Iida J."/>
            <person name="Imamura K."/>
            <person name="Itoh M."/>
            <person name="Kato T."/>
            <person name="Kawaji H."/>
            <person name="Kawagashira N."/>
            <person name="Kawashima T."/>
            <person name="Kojima M."/>
            <person name="Kondo S."/>
            <person name="Konno H."/>
            <person name="Nakano K."/>
            <person name="Ninomiya N."/>
            <person name="Nishio T."/>
            <person name="Okada M."/>
            <person name="Plessy C."/>
            <person name="Shibata K."/>
            <person name="Shiraki T."/>
            <person name="Suzuki S."/>
            <person name="Tagami M."/>
            <person name="Waki K."/>
            <person name="Watahiki A."/>
            <person name="Okamura-Oho Y."/>
            <person name="Suzuki H."/>
            <person name="Kawai J."/>
            <person name="Hayashizaki Y."/>
        </authorList>
    </citation>
    <scope>NUCLEOTIDE SEQUENCE [LARGE SCALE MRNA] (ISOFORM 1)</scope>
    <source>
        <strain>C57BL/6J</strain>
        <tissue>Bone marrow</tissue>
        <tissue>Cecum</tissue>
        <tissue>Thymus</tissue>
        <tissue>Vagina</tissue>
    </source>
</reference>
<reference key="5">
    <citation type="journal article" date="2009" name="PLoS Biol.">
        <title>Lineage-specific biology revealed by a finished genome assembly of the mouse.</title>
        <authorList>
            <person name="Church D.M."/>
            <person name="Goodstadt L."/>
            <person name="Hillier L.W."/>
            <person name="Zody M.C."/>
            <person name="Goldstein S."/>
            <person name="She X."/>
            <person name="Bult C.J."/>
            <person name="Agarwala R."/>
            <person name="Cherry J.L."/>
            <person name="DiCuccio M."/>
            <person name="Hlavina W."/>
            <person name="Kapustin Y."/>
            <person name="Meric P."/>
            <person name="Maglott D."/>
            <person name="Birtle Z."/>
            <person name="Marques A.C."/>
            <person name="Graves T."/>
            <person name="Zhou S."/>
            <person name="Teague B."/>
            <person name="Potamousis K."/>
            <person name="Churas C."/>
            <person name="Place M."/>
            <person name="Herschleb J."/>
            <person name="Runnheim R."/>
            <person name="Forrest D."/>
            <person name="Amos-Landgraf J."/>
            <person name="Schwartz D.C."/>
            <person name="Cheng Z."/>
            <person name="Lindblad-Toh K."/>
            <person name="Eichler E.E."/>
            <person name="Ponting C.P."/>
        </authorList>
    </citation>
    <scope>NUCLEOTIDE SEQUENCE [LARGE SCALE GENOMIC DNA]</scope>
    <source>
        <strain>C57BL/6J</strain>
    </source>
</reference>
<reference key="6">
    <citation type="journal article" date="2004" name="Genome Res.">
        <title>The status, quality, and expansion of the NIH full-length cDNA project: the Mammalian Gene Collection (MGC).</title>
        <authorList>
            <consortium name="The MGC Project Team"/>
        </authorList>
    </citation>
    <scope>NUCLEOTIDE SEQUENCE [LARGE SCALE MRNA] (ISOFORM 2)</scope>
    <source>
        <strain>FVB/N</strain>
        <tissue>Mammary gland</tissue>
    </source>
</reference>
<reference key="7">
    <citation type="journal article" date="2006" name="Nature">
        <title>Differential roles of MDA5 and RIG-I helicases in the recognition of RNA viruses.</title>
        <authorList>
            <person name="Kato H."/>
            <person name="Takeuchi O."/>
            <person name="Sato S."/>
            <person name="Yoneyama M."/>
            <person name="Yamamoto M."/>
            <person name="Matsui K."/>
            <person name="Uematsu S."/>
            <person name="Jung A."/>
            <person name="Kawai T."/>
            <person name="Ishii K.J."/>
            <person name="Yamaguchi O."/>
            <person name="Otsu K."/>
            <person name="Tsujimura T."/>
            <person name="Koh C.S."/>
            <person name="Reis e Sousa C."/>
            <person name="Matsuura Y."/>
            <person name="Fujita T."/>
            <person name="Akira S."/>
        </authorList>
    </citation>
    <scope>FUNCTION</scope>
</reference>
<reference key="8">
    <citation type="journal article" date="2007" name="Proc. Natl. Acad. Sci. U.S.A.">
        <title>Large-scale phosphorylation analysis of mouse liver.</title>
        <authorList>
            <person name="Villen J."/>
            <person name="Beausoleil S.A."/>
            <person name="Gerber S.A."/>
            <person name="Gygi S.P."/>
        </authorList>
    </citation>
    <scope>PHOSPHORYLATION [LARGE SCALE ANALYSIS] AT SER-645 AND SER-648</scope>
    <scope>IDENTIFICATION BY MASS SPECTROMETRY [LARGE SCALE ANALYSIS]</scope>
    <source>
        <tissue>Liver</tissue>
    </source>
</reference>
<reference key="9">
    <citation type="journal article" date="2008" name="J. Virol.">
        <title>Distinct RIG-I and MDA5 signaling by RNA viruses in innate immunity.</title>
        <authorList>
            <person name="Loo Y.M."/>
            <person name="Fornek J."/>
            <person name="Crochet N."/>
            <person name="Bajwa G."/>
            <person name="Perwitasari O."/>
            <person name="Martinez-Sobrido L."/>
            <person name="Akira S."/>
            <person name="Gill M.A."/>
            <person name="Garcia-Sastre A."/>
            <person name="Katze M.G."/>
            <person name="Gale M. Jr."/>
        </authorList>
    </citation>
    <scope>FUNCTION</scope>
</reference>
<reference key="10">
    <citation type="journal article" date="2009" name="Immunity">
        <title>The phagosomal proteome in interferon-gamma-activated macrophages.</title>
        <authorList>
            <person name="Trost M."/>
            <person name="English L."/>
            <person name="Lemieux S."/>
            <person name="Courcelles M."/>
            <person name="Desjardins M."/>
            <person name="Thibault P."/>
        </authorList>
    </citation>
    <scope>IDENTIFICATION BY MASS SPECTROMETRY [LARGE SCALE ANALYSIS]</scope>
</reference>
<reference key="11">
    <citation type="journal article" date="2009" name="J. Virol.">
        <title>Activation of MDA5 requires higher-order RNA structures generated during virus infection.</title>
        <authorList>
            <person name="Pichlmair A."/>
            <person name="Schulz O."/>
            <person name="Tan C.P."/>
            <person name="Rehwinkel J."/>
            <person name="Kato H."/>
            <person name="Takeuchi O."/>
            <person name="Akira S."/>
            <person name="Way M."/>
            <person name="Schiavo G."/>
            <person name="Reis e Sousa C."/>
        </authorList>
    </citation>
    <scope>FUNCTION</scope>
</reference>
<reference key="12">
    <citation type="journal article" date="2010" name="Cell">
        <title>A tissue-specific atlas of mouse protein phosphorylation and expression.</title>
        <authorList>
            <person name="Huttlin E.L."/>
            <person name="Jedrychowski M.P."/>
            <person name="Elias J.E."/>
            <person name="Goswami T."/>
            <person name="Rad R."/>
            <person name="Beausoleil S.A."/>
            <person name="Villen J."/>
            <person name="Haas W."/>
            <person name="Sowa M.E."/>
            <person name="Gygi S.P."/>
        </authorList>
    </citation>
    <scope>PHOSPHORYLATION [LARGE SCALE ANALYSIS] AT SER-289; SER-291; SER-302; SER-645 AND SER-648</scope>
    <scope>IDENTIFICATION BY MASS SPECTROMETRY [LARGE SCALE ANALYSIS]</scope>
    <source>
        <tissue>Brown adipose tissue</tissue>
        <tissue>Heart</tissue>
        <tissue>Kidney</tissue>
        <tissue>Liver</tissue>
        <tissue>Lung</tissue>
        <tissue>Pancreas</tissue>
        <tissue>Spleen</tissue>
        <tissue>Testis</tissue>
    </source>
</reference>
<reference key="13">
    <citation type="journal article" date="2011" name="Immunity">
        <title>Immune signaling by RIG-I-like receptors.</title>
        <authorList>
            <person name="Loo Y.M."/>
            <person name="Gale M. Jr."/>
        </authorList>
    </citation>
    <scope>REVIEW ON FUNCTION</scope>
</reference>
<reference key="14">
    <citation type="journal article" date="2011" name="Immunol. Rev.">
        <title>RIG-I-like receptors: cytoplasmic sensors for non-self RNA.</title>
        <authorList>
            <person name="Kato H."/>
            <person name="Takahasi K."/>
            <person name="Fujita T."/>
        </authorList>
    </citation>
    <scope>REVIEW ON FUNCTION</scope>
</reference>
<reference key="15">
    <citation type="journal article" date="2011" name="J. Interferon Cytokine Res.">
        <title>Retinoic acid-inducible gene-I-like receptors.</title>
        <authorList>
            <person name="Onoguchi K."/>
            <person name="Yoneyama M."/>
            <person name="Fujita T."/>
        </authorList>
    </citation>
    <scope>REVIEW ON FUNCTION</scope>
</reference>
<reference key="16">
    <citation type="journal article" date="2011" name="Nat. Immunol.">
        <title>2 methylate or not 2 methylate: viral evasion of the type I interferon response.</title>
        <authorList>
            <person name="Garcia-Sastre A."/>
        </authorList>
    </citation>
    <scope>REVIEW ON FUNCTION</scope>
</reference>
<reference key="17">
    <citation type="journal article" date="2011" name="Nat. Immunol.">
        <title>Ribose 2'-O-methylation provides a molecular signature for the distinction of self and non-self mRNA dependent on the RNA sensor Mda5.</title>
        <authorList>
            <person name="Zuest R."/>
            <person name="Cervantes-Barragan L."/>
            <person name="Habjan M."/>
            <person name="Maier R."/>
            <person name="Neuman B.W."/>
            <person name="Ziebuhr J."/>
            <person name="Szretter K.J."/>
            <person name="Baker S.C."/>
            <person name="Barchet W."/>
            <person name="Diamond M.S."/>
            <person name="Siddell S.G."/>
            <person name="Ludewig B."/>
            <person name="Thiel V."/>
        </authorList>
    </citation>
    <scope>FUNCTION</scope>
</reference>
<reference key="18">
    <citation type="journal article" date="2012" name="EMBO J.">
        <title>MDA5 cooperatively forms dimers and ATP-sensitive filaments upon binding double-stranded RNA.</title>
        <authorList>
            <person name="Berke I.C."/>
            <person name="Modis Y."/>
        </authorList>
    </citation>
    <scope>X-RAY CRYSTALLOGRAPHY (2.00 ANGSTROMS) OF 545-697</scope>
    <scope>SUBUNIT</scope>
</reference>
<accession>Q8R5F7</accession>
<accession>A2AUY7</accession>
<accession>Q3U6S2</accession>
<accession>Q68EM4</accession>
<accession>Q8BYC9</accession>
<accession>Q8BZ01</accession>
<accession>Q8K5C7</accession>
<accession>Q8R144</accession>
<accession>Q8VE79</accession>
<accession>Q99KS4</accession>
<accession>Q9D2Z5</accession>
<feature type="chain" id="PRO_0000102013" description="Interferon-induced helicase C domain-containing protein 1">
    <location>
        <begin position="1"/>
        <end position="1025"/>
    </location>
</feature>
<feature type="domain" description="CARD 1">
    <location>
        <begin position="7"/>
        <end position="97"/>
    </location>
</feature>
<feature type="domain" description="CARD 2">
    <location>
        <begin position="110"/>
        <end position="190"/>
    </location>
</feature>
<feature type="domain" description="Helicase ATP-binding" evidence="2">
    <location>
        <begin position="317"/>
        <end position="510"/>
    </location>
</feature>
<feature type="domain" description="Helicase C-terminal" evidence="3">
    <location>
        <begin position="700"/>
        <end position="872"/>
    </location>
</feature>
<feature type="domain" description="RLR CTR" evidence="4">
    <location>
        <begin position="893"/>
        <end position="1020"/>
    </location>
</feature>
<feature type="region of interest" description="Disordered" evidence="5">
    <location>
        <begin position="273"/>
        <end position="297"/>
    </location>
</feature>
<feature type="compositionally biased region" description="Polar residues" evidence="5">
    <location>
        <begin position="275"/>
        <end position="297"/>
    </location>
</feature>
<feature type="binding site" evidence="4">
    <location>
        <position position="907"/>
    </location>
    <ligand>
        <name>Zn(2+)</name>
        <dbReference type="ChEBI" id="CHEBI:29105"/>
    </ligand>
</feature>
<feature type="binding site" evidence="4">
    <location>
        <position position="910"/>
    </location>
    <ligand>
        <name>Zn(2+)</name>
        <dbReference type="ChEBI" id="CHEBI:29105"/>
    </ligand>
</feature>
<feature type="binding site" evidence="4">
    <location>
        <position position="962"/>
    </location>
    <ligand>
        <name>Zn(2+)</name>
        <dbReference type="ChEBI" id="CHEBI:29105"/>
    </ligand>
</feature>
<feature type="binding site" evidence="4">
    <location>
        <position position="964"/>
    </location>
    <ligand>
        <name>Zn(2+)</name>
        <dbReference type="ChEBI" id="CHEBI:29105"/>
    </ligand>
</feature>
<feature type="site" description="Cleavage">
    <location>
        <begin position="208"/>
        <end position="209"/>
    </location>
</feature>
<feature type="site" description="Cleavage">
    <location>
        <begin position="216"/>
        <end position="217"/>
    </location>
</feature>
<feature type="site" description="Cleavage">
    <location>
        <begin position="251"/>
        <end position="252"/>
    </location>
</feature>
<feature type="modified residue" description="Phosphoserine" evidence="15">
    <location>
        <position position="289"/>
    </location>
</feature>
<feature type="modified residue" description="Phosphoserine" evidence="15">
    <location>
        <position position="291"/>
    </location>
</feature>
<feature type="modified residue" description="Phosphoserine" evidence="15">
    <location>
        <position position="302"/>
    </location>
</feature>
<feature type="modified residue" description="Phosphoserine" evidence="14 15">
    <location>
        <position position="645"/>
    </location>
</feature>
<feature type="modified residue" description="Phosphoserine" evidence="14 15">
    <location>
        <position position="648"/>
    </location>
</feature>
<feature type="modified residue" description="Phosphoserine; by RIOK3" evidence="1">
    <location>
        <position position="828"/>
    </location>
</feature>
<feature type="cross-link" description="Glycyl lysine isopeptide (Lys-Gly) (interchain with G-Cter in ISG15)" evidence="1">
    <location>
        <position position="23"/>
    </location>
</feature>
<feature type="cross-link" description="Glycyl lysine isopeptide (Lys-Gly) (interchain with G-Cter in ISG15)" evidence="1">
    <location>
        <position position="43"/>
    </location>
</feature>
<feature type="splice variant" id="VSP_013339" description="In isoform 2." evidence="11">
    <location>
        <begin position="207"/>
        <end position="255"/>
    </location>
</feature>
<feature type="sequence conflict" description="In Ref. 6; AAH80200." evidence="12" ref="6">
    <original>T</original>
    <variation>I</variation>
    <location>
        <position position="100"/>
    </location>
</feature>
<feature type="sequence conflict" description="In Ref. 4; BAE31652." evidence="12" ref="4">
    <original>V</original>
    <variation>E</variation>
    <location>
        <position position="339"/>
    </location>
</feature>
<feature type="sequence conflict" description="In Ref. 6; AAH25508." evidence="12" ref="6">
    <original>IST</original>
    <variation>TRP</variation>
    <location>
        <begin position="412"/>
        <end position="414"/>
    </location>
</feature>
<feature type="sequence conflict" description="In Ref. 6; AAH25508." evidence="12" ref="6">
    <original>Y</original>
    <variation>H</variation>
    <location>
        <position position="624"/>
    </location>
</feature>
<feature type="sequence conflict" description="In Ref. 3; AAM21359." evidence="12" ref="3">
    <original>T</original>
    <variation>A</variation>
    <location>
        <position position="629"/>
    </location>
</feature>
<feature type="sequence conflict" description="In Ref. 6; AAH25508/AAH04031/AAH80200." evidence="12" ref="6">
    <original>K</original>
    <variation>E</variation>
    <location>
        <position position="647"/>
    </location>
</feature>
<feature type="sequence conflict" description="In Ref. 4; BAB31303." evidence="12" ref="4">
    <original>K</original>
    <variation>E</variation>
    <location>
        <position position="889"/>
    </location>
</feature>
<feature type="helix" evidence="17">
    <location>
        <begin position="311"/>
        <end position="321"/>
    </location>
</feature>
<feature type="strand" evidence="17">
    <location>
        <begin position="326"/>
        <end position="329"/>
    </location>
</feature>
<feature type="helix" evidence="17">
    <location>
        <begin position="336"/>
        <end position="353"/>
    </location>
</feature>
<feature type="strand" evidence="17">
    <location>
        <begin position="360"/>
        <end position="365"/>
    </location>
</feature>
<feature type="helix" evidence="17">
    <location>
        <begin position="367"/>
        <end position="376"/>
    </location>
</feature>
<feature type="helix" evidence="17">
    <location>
        <begin position="379"/>
        <end position="382"/>
    </location>
</feature>
<feature type="turn" evidence="17">
    <location>
        <begin position="383"/>
        <end position="385"/>
    </location>
</feature>
<feature type="strand" evidence="17">
    <location>
        <begin position="388"/>
        <end position="390"/>
    </location>
</feature>
<feature type="strand" evidence="18">
    <location>
        <begin position="393"/>
        <end position="395"/>
    </location>
</feature>
<feature type="helix" evidence="17">
    <location>
        <begin position="397"/>
        <end position="400"/>
    </location>
</feature>
<feature type="helix" evidence="17">
    <location>
        <begin position="401"/>
        <end position="407"/>
    </location>
</feature>
<feature type="strand" evidence="17">
    <location>
        <begin position="409"/>
        <end position="414"/>
    </location>
</feature>
<feature type="helix" evidence="17">
    <location>
        <begin position="415"/>
        <end position="426"/>
    </location>
</feature>
<feature type="strand" evidence="17">
    <location>
        <begin position="428"/>
        <end position="430"/>
    </location>
</feature>
<feature type="helix" evidence="17">
    <location>
        <begin position="435"/>
        <end position="437"/>
    </location>
</feature>
<feature type="strand" evidence="17">
    <location>
        <begin position="439"/>
        <end position="445"/>
    </location>
</feature>
<feature type="helix" evidence="17">
    <location>
        <begin position="446"/>
        <end position="448"/>
    </location>
</feature>
<feature type="helix" evidence="17">
    <location>
        <begin position="454"/>
        <end position="474"/>
    </location>
</feature>
<feature type="strand" evidence="17">
    <location>
        <begin position="475"/>
        <end position="477"/>
    </location>
</feature>
<feature type="strand" evidence="17">
    <location>
        <begin position="484"/>
        <end position="490"/>
    </location>
</feature>
<feature type="helix" evidence="17">
    <location>
        <begin position="500"/>
        <end position="513"/>
    </location>
</feature>
<feature type="helix" evidence="17">
    <location>
        <begin position="526"/>
        <end position="532"/>
    </location>
</feature>
<feature type="strand" evidence="17">
    <location>
        <begin position="537"/>
        <end position="543"/>
    </location>
</feature>
<feature type="helix" evidence="16">
    <location>
        <begin position="550"/>
        <end position="565"/>
    </location>
</feature>
<feature type="strand" evidence="18">
    <location>
        <begin position="574"/>
        <end position="576"/>
    </location>
</feature>
<feature type="helix" evidence="16">
    <location>
        <begin position="577"/>
        <end position="593"/>
    </location>
</feature>
<feature type="helix" evidence="16">
    <location>
        <begin position="596"/>
        <end position="617"/>
    </location>
</feature>
<feature type="helix" evidence="16">
    <location>
        <begin position="620"/>
        <end position="640"/>
    </location>
</feature>
<feature type="helix" evidence="16">
    <location>
        <begin position="671"/>
        <end position="691"/>
    </location>
</feature>
<feature type="helix" evidence="16">
    <location>
        <begin position="694"/>
        <end position="696"/>
    </location>
</feature>
<feature type="helix" evidence="17">
    <location>
        <begin position="699"/>
        <end position="715"/>
    </location>
</feature>
<feature type="strand" evidence="17">
    <location>
        <begin position="721"/>
        <end position="724"/>
    </location>
</feature>
<feature type="helix" evidence="17">
    <location>
        <begin position="728"/>
        <end position="740"/>
    </location>
</feature>
<feature type="helix" evidence="17">
    <location>
        <begin position="742"/>
        <end position="747"/>
    </location>
</feature>
<feature type="strand" evidence="17">
    <location>
        <begin position="751"/>
        <end position="754"/>
    </location>
</feature>
<feature type="strand" evidence="17">
    <location>
        <begin position="761"/>
        <end position="763"/>
    </location>
</feature>
<feature type="helix" evidence="17">
    <location>
        <begin position="768"/>
        <end position="780"/>
    </location>
</feature>
<feature type="strand" evidence="17">
    <location>
        <begin position="785"/>
        <end position="789"/>
    </location>
</feature>
<feature type="helix" evidence="17">
    <location>
        <begin position="790"/>
        <end position="792"/>
    </location>
</feature>
<feature type="strand" evidence="17">
    <location>
        <begin position="793"/>
        <end position="795"/>
    </location>
</feature>
<feature type="strand" evidence="17">
    <location>
        <begin position="802"/>
        <end position="808"/>
    </location>
</feature>
<feature type="helix" evidence="17">
    <location>
        <begin position="813"/>
        <end position="821"/>
    </location>
</feature>
<feature type="strand" evidence="17">
    <location>
        <begin position="825"/>
        <end position="827"/>
    </location>
</feature>
<feature type="strand" evidence="17">
    <location>
        <begin position="829"/>
        <end position="839"/>
    </location>
</feature>
<feature type="helix" evidence="17">
    <location>
        <begin position="840"/>
        <end position="862"/>
    </location>
</feature>
<feature type="helix" evidence="17">
    <location>
        <begin position="866"/>
        <end position="890"/>
    </location>
</feature>
<feature type="helix" evidence="17">
    <location>
        <begin position="900"/>
        <end position="902"/>
    </location>
</feature>
<feature type="strand" evidence="17">
    <location>
        <begin position="904"/>
        <end position="910"/>
    </location>
</feature>
<feature type="strand" evidence="17">
    <location>
        <begin position="913"/>
        <end position="916"/>
    </location>
</feature>
<feature type="strand" evidence="17">
    <location>
        <begin position="919"/>
        <end position="923"/>
    </location>
</feature>
<feature type="turn" evidence="17">
    <location>
        <begin position="924"/>
        <end position="926"/>
    </location>
</feature>
<feature type="strand" evidence="17">
    <location>
        <begin position="927"/>
        <end position="930"/>
    </location>
</feature>
<feature type="helix" evidence="17">
    <location>
        <begin position="933"/>
        <end position="936"/>
    </location>
</feature>
<feature type="strand" evidence="18">
    <location>
        <begin position="940"/>
        <end position="942"/>
    </location>
</feature>
<feature type="helix" evidence="17">
    <location>
        <begin position="945"/>
        <end position="948"/>
    </location>
</feature>
<feature type="strand" evidence="17">
    <location>
        <begin position="959"/>
        <end position="961"/>
    </location>
</feature>
<feature type="strand" evidence="17">
    <location>
        <begin position="967"/>
        <end position="974"/>
    </location>
</feature>
<feature type="strand" evidence="17">
    <location>
        <begin position="977"/>
        <end position="982"/>
    </location>
</feature>
<feature type="helix" evidence="17">
    <location>
        <begin position="984"/>
        <end position="986"/>
    </location>
</feature>
<feature type="strand" evidence="17">
    <location>
        <begin position="987"/>
        <end position="990"/>
    </location>
</feature>
<feature type="strand" evidence="17">
    <location>
        <begin position="992"/>
        <end position="994"/>
    </location>
</feature>
<feature type="helix" evidence="17">
    <location>
        <begin position="1003"/>
        <end position="1005"/>
    </location>
</feature>
<feature type="turn" evidence="18">
    <location>
        <begin position="1015"/>
        <end position="1018"/>
    </location>
</feature>
<dbReference type="EC" id="3.6.4.13" evidence="1"/>
<dbReference type="EMBL" id="AY075132">
    <property type="protein sequence ID" value="AAL77205.1"/>
    <property type="molecule type" value="mRNA"/>
</dbReference>
<dbReference type="EMBL" id="AF374384">
    <property type="protein sequence ID" value="AAM21359.1"/>
    <property type="molecule type" value="mRNA"/>
</dbReference>
<dbReference type="EMBL" id="AK018602">
    <property type="protein sequence ID" value="BAB31303.2"/>
    <property type="molecule type" value="mRNA"/>
</dbReference>
<dbReference type="EMBL" id="AK037057">
    <property type="protein sequence ID" value="BAC29687.2"/>
    <property type="molecule type" value="mRNA"/>
</dbReference>
<dbReference type="EMBL" id="AK040519">
    <property type="protein sequence ID" value="BAC30614.1"/>
    <property type="molecule type" value="mRNA"/>
</dbReference>
<dbReference type="EMBL" id="AK153018">
    <property type="protein sequence ID" value="BAE31652.1"/>
    <property type="molecule type" value="mRNA"/>
</dbReference>
<dbReference type="EMBL" id="AL929246">
    <property type="status" value="NOT_ANNOTATED_CDS"/>
    <property type="molecule type" value="Genomic_DNA"/>
</dbReference>
<dbReference type="EMBL" id="BC004031">
    <property type="protein sequence ID" value="AAH04031.1"/>
    <property type="molecule type" value="mRNA"/>
</dbReference>
<dbReference type="EMBL" id="BC019605">
    <property type="protein sequence ID" value="AAH19605.1"/>
    <property type="molecule type" value="mRNA"/>
</dbReference>
<dbReference type="EMBL" id="BC025508">
    <property type="protein sequence ID" value="AAH25508.1"/>
    <property type="status" value="ALT_INIT"/>
    <property type="molecule type" value="mRNA"/>
</dbReference>
<dbReference type="EMBL" id="BC080200">
    <property type="protein sequence ID" value="AAH80200.1"/>
    <property type="molecule type" value="mRNA"/>
</dbReference>
<dbReference type="CCDS" id="CCDS16068.1">
    <molecule id="Q8R5F7-1"/>
</dbReference>
<dbReference type="CCDS" id="CCDS50594.1">
    <molecule id="Q8R5F7-2"/>
</dbReference>
<dbReference type="RefSeq" id="NP_001157949.1">
    <molecule id="Q8R5F7-2"/>
    <property type="nucleotide sequence ID" value="NM_001164477.1"/>
</dbReference>
<dbReference type="RefSeq" id="NP_082111.2">
    <molecule id="Q8R5F7-1"/>
    <property type="nucleotide sequence ID" value="NM_027835.3"/>
</dbReference>
<dbReference type="PDB" id="3TS9">
    <property type="method" value="X-ray"/>
    <property type="resolution" value="2.00 A"/>
    <property type="chains" value="A=545-697"/>
</dbReference>
<dbReference type="PDB" id="6G19">
    <property type="method" value="EM"/>
    <property type="resolution" value="3.68 A"/>
    <property type="chains" value="A=307-1020"/>
</dbReference>
<dbReference type="PDB" id="6G1S">
    <property type="method" value="EM"/>
    <property type="resolution" value="3.93 A"/>
    <property type="chains" value="A=310-1020"/>
</dbReference>
<dbReference type="PDB" id="6G1X">
    <property type="method" value="EM"/>
    <property type="resolution" value="3.93 A"/>
    <property type="chains" value="A=307-1020"/>
</dbReference>
<dbReference type="PDB" id="6GJZ">
    <property type="method" value="EM"/>
    <property type="resolution" value="4.06 A"/>
    <property type="chains" value="A=1-1025"/>
</dbReference>
<dbReference type="PDB" id="6GKH">
    <property type="method" value="EM"/>
    <property type="resolution" value="4.06 A"/>
    <property type="chains" value="A=1-1025"/>
</dbReference>
<dbReference type="PDB" id="6GKM">
    <property type="method" value="EM"/>
    <property type="resolution" value="3.87 A"/>
    <property type="chains" value="A=1-1025"/>
</dbReference>
<dbReference type="PDB" id="6H61">
    <property type="method" value="EM"/>
    <property type="resolution" value="4.02 A"/>
    <property type="chains" value="A=1-1025"/>
</dbReference>
<dbReference type="PDB" id="6H66">
    <property type="method" value="EM"/>
    <property type="resolution" value="4.16 A"/>
    <property type="chains" value="A=1-1025"/>
</dbReference>
<dbReference type="PDB" id="7BKP">
    <property type="method" value="EM"/>
    <property type="resolution" value="2.80 A"/>
    <property type="chains" value="A=1-1025"/>
</dbReference>
<dbReference type="PDB" id="7BKQ">
    <property type="method" value="EM"/>
    <property type="resolution" value="3.40 A"/>
    <property type="chains" value="A=307-1020"/>
</dbReference>
<dbReference type="PDB" id="7NGA">
    <property type="method" value="EM"/>
    <property type="resolution" value="3.90 A"/>
    <property type="chains" value="A=1-1025"/>
</dbReference>
<dbReference type="PDB" id="7NIC">
    <property type="method" value="EM"/>
    <property type="resolution" value="4.30 A"/>
    <property type="chains" value="A=1-1025"/>
</dbReference>
<dbReference type="PDB" id="7NIQ">
    <property type="method" value="EM"/>
    <property type="resolution" value="4.30 A"/>
    <property type="chains" value="B=1-1025"/>
</dbReference>
<dbReference type="PDB" id="9F0J">
    <property type="method" value="EM"/>
    <property type="resolution" value="3.35 A"/>
    <property type="chains" value="A=3-1025"/>
</dbReference>
<dbReference type="PDB" id="9F1U">
    <property type="method" value="EM"/>
    <property type="resolution" value="3.67 A"/>
    <property type="chains" value="A=3-1025"/>
</dbReference>
<dbReference type="PDB" id="9F20">
    <property type="method" value="EM"/>
    <property type="resolution" value="4.13 A"/>
    <property type="chains" value="A=3-1025"/>
</dbReference>
<dbReference type="PDB" id="9F2L">
    <property type="method" value="EM"/>
    <property type="resolution" value="3.86 A"/>
    <property type="chains" value="A=3-1025"/>
</dbReference>
<dbReference type="PDB" id="9F2W">
    <property type="method" value="EM"/>
    <property type="resolution" value="4.21 A"/>
    <property type="chains" value="A=3-1025"/>
</dbReference>
<dbReference type="PDB" id="9F3P">
    <property type="method" value="EM"/>
    <property type="resolution" value="3.97 A"/>
    <property type="chains" value="A=3-1025"/>
</dbReference>
<dbReference type="PDBsum" id="3TS9"/>
<dbReference type="PDBsum" id="6G19"/>
<dbReference type="PDBsum" id="6G1S"/>
<dbReference type="PDBsum" id="6G1X"/>
<dbReference type="PDBsum" id="6GJZ"/>
<dbReference type="PDBsum" id="6GKH"/>
<dbReference type="PDBsum" id="6GKM"/>
<dbReference type="PDBsum" id="6H61"/>
<dbReference type="PDBsum" id="6H66"/>
<dbReference type="PDBsum" id="7BKP"/>
<dbReference type="PDBsum" id="7BKQ"/>
<dbReference type="PDBsum" id="7NGA"/>
<dbReference type="PDBsum" id="7NIC"/>
<dbReference type="PDBsum" id="7NIQ"/>
<dbReference type="PDBsum" id="9F0J"/>
<dbReference type="PDBsum" id="9F1U"/>
<dbReference type="PDBsum" id="9F20"/>
<dbReference type="PDBsum" id="9F2L"/>
<dbReference type="PDBsum" id="9F2W"/>
<dbReference type="PDBsum" id="9F3P"/>
<dbReference type="EMDB" id="EMD-0012"/>
<dbReference type="EMDB" id="EMD-0023"/>
<dbReference type="EMDB" id="EMD-0024"/>
<dbReference type="EMDB" id="EMD-0143"/>
<dbReference type="EMDB" id="EMD-0145"/>
<dbReference type="EMDB" id="EMD-11937"/>
<dbReference type="EMDB" id="EMD-12092"/>
<dbReference type="EMDB" id="EMD-12213"/>
<dbReference type="EMDB" id="EMD-12288"/>
<dbReference type="EMDB" id="EMD-12294"/>
<dbReference type="EMDB" id="EMD-4338"/>
<dbReference type="EMDB" id="EMD-4340"/>
<dbReference type="EMDB" id="EMD-4341"/>
<dbReference type="EMDB" id="EMD-50111"/>
<dbReference type="EMDB" id="EMD-50136"/>
<dbReference type="EMDB" id="EMD-50137"/>
<dbReference type="EMDB" id="EMD-50150"/>
<dbReference type="EMDB" id="EMD-50165"/>
<dbReference type="EMDB" id="EMD-50175"/>
<dbReference type="SMR" id="Q8R5F7"/>
<dbReference type="BioGRID" id="214799">
    <property type="interactions" value="4"/>
</dbReference>
<dbReference type="DIP" id="DIP-60085N"/>
<dbReference type="FunCoup" id="Q8R5F7">
    <property type="interactions" value="647"/>
</dbReference>
<dbReference type="IntAct" id="Q8R5F7">
    <property type="interactions" value="1"/>
</dbReference>
<dbReference type="STRING" id="10090.ENSMUSP00000028259"/>
<dbReference type="iPTMnet" id="Q8R5F7"/>
<dbReference type="PhosphoSitePlus" id="Q8R5F7"/>
<dbReference type="SwissPalm" id="Q8R5F7"/>
<dbReference type="jPOST" id="Q8R5F7"/>
<dbReference type="PaxDb" id="10090-ENSMUSP00000028259"/>
<dbReference type="PeptideAtlas" id="Q8R5F7"/>
<dbReference type="ProteomicsDB" id="273099">
    <molecule id="Q8R5F7-1"/>
</dbReference>
<dbReference type="ProteomicsDB" id="273100">
    <molecule id="Q8R5F7-2"/>
</dbReference>
<dbReference type="Antibodypedia" id="805">
    <property type="antibodies" value="507 antibodies from 41 providers"/>
</dbReference>
<dbReference type="DNASU" id="71586"/>
<dbReference type="Ensembl" id="ENSMUST00000028259.12">
    <molecule id="Q8R5F7-1"/>
    <property type="protein sequence ID" value="ENSMUSP00000028259.6"/>
    <property type="gene ID" value="ENSMUSG00000026896.15"/>
</dbReference>
<dbReference type="Ensembl" id="ENSMUST00000112459.4">
    <molecule id="Q8R5F7-2"/>
    <property type="protein sequence ID" value="ENSMUSP00000108078.4"/>
    <property type="gene ID" value="ENSMUSG00000026896.15"/>
</dbReference>
<dbReference type="GeneID" id="71586"/>
<dbReference type="KEGG" id="mmu:71586"/>
<dbReference type="UCSC" id="uc008jvm.2">
    <molecule id="Q8R5F7-1"/>
    <property type="organism name" value="mouse"/>
</dbReference>
<dbReference type="UCSC" id="uc012bvy.1">
    <molecule id="Q8R5F7-2"/>
    <property type="organism name" value="mouse"/>
</dbReference>
<dbReference type="AGR" id="MGI:1918836"/>
<dbReference type="CTD" id="64135"/>
<dbReference type="MGI" id="MGI:1918836">
    <property type="gene designation" value="Ifih1"/>
</dbReference>
<dbReference type="VEuPathDB" id="HostDB:ENSMUSG00000026896"/>
<dbReference type="eggNOG" id="KOG0354">
    <property type="taxonomic scope" value="Eukaryota"/>
</dbReference>
<dbReference type="GeneTree" id="ENSGT00940000153173"/>
<dbReference type="HOGENOM" id="CLU_006888_0_0_1"/>
<dbReference type="InParanoid" id="Q8R5F7"/>
<dbReference type="OMA" id="TFCQMNP"/>
<dbReference type="OrthoDB" id="416741at2759"/>
<dbReference type="PhylomeDB" id="Q8R5F7"/>
<dbReference type="TreeFam" id="TF330258"/>
<dbReference type="Reactome" id="R-MMU-5689880">
    <property type="pathway name" value="Ub-specific processing proteases"/>
</dbReference>
<dbReference type="BioGRID-ORCS" id="71586">
    <property type="hits" value="1 hit in 79 CRISPR screens"/>
</dbReference>
<dbReference type="EvolutionaryTrace" id="Q8R5F7"/>
<dbReference type="PRO" id="PR:Q8R5F7"/>
<dbReference type="Proteomes" id="UP000000589">
    <property type="component" value="Chromosome 2"/>
</dbReference>
<dbReference type="RNAct" id="Q8R5F7">
    <property type="molecule type" value="protein"/>
</dbReference>
<dbReference type="Bgee" id="ENSMUSG00000026896">
    <property type="expression patterns" value="Expressed in small intestine Peyer's patch and 189 other cell types or tissues"/>
</dbReference>
<dbReference type="ExpressionAtlas" id="Q8R5F7">
    <property type="expression patterns" value="baseline and differential"/>
</dbReference>
<dbReference type="GO" id="GO:0005737">
    <property type="term" value="C:cytoplasm"/>
    <property type="evidence" value="ECO:0000314"/>
    <property type="project" value="MGI"/>
</dbReference>
<dbReference type="GO" id="GO:0005739">
    <property type="term" value="C:mitochondrion"/>
    <property type="evidence" value="ECO:0000250"/>
    <property type="project" value="UniProtKB"/>
</dbReference>
<dbReference type="GO" id="GO:0005634">
    <property type="term" value="C:nucleus"/>
    <property type="evidence" value="ECO:0007669"/>
    <property type="project" value="UniProtKB-SubCell"/>
</dbReference>
<dbReference type="GO" id="GO:0005524">
    <property type="term" value="F:ATP binding"/>
    <property type="evidence" value="ECO:0007669"/>
    <property type="project" value="UniProtKB-KW"/>
</dbReference>
<dbReference type="GO" id="GO:0016887">
    <property type="term" value="F:ATP hydrolysis activity"/>
    <property type="evidence" value="ECO:0000250"/>
    <property type="project" value="UniProtKB"/>
</dbReference>
<dbReference type="GO" id="GO:0003677">
    <property type="term" value="F:DNA binding"/>
    <property type="evidence" value="ECO:0007669"/>
    <property type="project" value="InterPro"/>
</dbReference>
<dbReference type="GO" id="GO:0003725">
    <property type="term" value="F:double-stranded RNA binding"/>
    <property type="evidence" value="ECO:0000250"/>
    <property type="project" value="UniProtKB"/>
</dbReference>
<dbReference type="GO" id="GO:0042802">
    <property type="term" value="F:identical protein binding"/>
    <property type="evidence" value="ECO:0000250"/>
    <property type="project" value="UniProtKB"/>
</dbReference>
<dbReference type="GO" id="GO:0038187">
    <property type="term" value="F:pattern recognition receptor activity"/>
    <property type="evidence" value="ECO:0007669"/>
    <property type="project" value="Ensembl"/>
</dbReference>
<dbReference type="GO" id="GO:0019904">
    <property type="term" value="F:protein domain specific binding"/>
    <property type="evidence" value="ECO:0000266"/>
    <property type="project" value="MGI"/>
</dbReference>
<dbReference type="GO" id="GO:0043021">
    <property type="term" value="F:ribonucleoprotein complex binding"/>
    <property type="evidence" value="ECO:0007669"/>
    <property type="project" value="Ensembl"/>
</dbReference>
<dbReference type="GO" id="GO:0003724">
    <property type="term" value="F:RNA helicase activity"/>
    <property type="evidence" value="ECO:0000250"/>
    <property type="project" value="UniProtKB"/>
</dbReference>
<dbReference type="GO" id="GO:0003727">
    <property type="term" value="F:single-stranded RNA binding"/>
    <property type="evidence" value="ECO:0000250"/>
    <property type="project" value="UniProtKB"/>
</dbReference>
<dbReference type="GO" id="GO:0008270">
    <property type="term" value="F:zinc ion binding"/>
    <property type="evidence" value="ECO:0000250"/>
    <property type="project" value="UniProtKB"/>
</dbReference>
<dbReference type="GO" id="GO:0140374">
    <property type="term" value="P:antiviral innate immune response"/>
    <property type="evidence" value="ECO:0000315"/>
    <property type="project" value="MGI"/>
</dbReference>
<dbReference type="GO" id="GO:0071360">
    <property type="term" value="P:cellular response to exogenous dsRNA"/>
    <property type="evidence" value="ECO:0000250"/>
    <property type="project" value="UniProtKB"/>
</dbReference>
<dbReference type="GO" id="GO:0098586">
    <property type="term" value="P:cellular response to virus"/>
    <property type="evidence" value="ECO:0007669"/>
    <property type="project" value="Ensembl"/>
</dbReference>
<dbReference type="GO" id="GO:0051607">
    <property type="term" value="P:defense response to virus"/>
    <property type="evidence" value="ECO:0000250"/>
    <property type="project" value="UniProtKB"/>
</dbReference>
<dbReference type="GO" id="GO:0045087">
    <property type="term" value="P:innate immune response"/>
    <property type="evidence" value="ECO:0000315"/>
    <property type="project" value="UniProtKB"/>
</dbReference>
<dbReference type="GO" id="GO:0039530">
    <property type="term" value="P:MDA-5 signaling pathway"/>
    <property type="evidence" value="ECO:0000250"/>
    <property type="project" value="UniProtKB"/>
</dbReference>
<dbReference type="GO" id="GO:0045071">
    <property type="term" value="P:negative regulation of viral genome replication"/>
    <property type="evidence" value="ECO:0000250"/>
    <property type="project" value="UniProtKB"/>
</dbReference>
<dbReference type="GO" id="GO:0032727">
    <property type="term" value="P:positive regulation of interferon-alpha production"/>
    <property type="evidence" value="ECO:0000250"/>
    <property type="project" value="UniProtKB"/>
</dbReference>
<dbReference type="GO" id="GO:0032728">
    <property type="term" value="P:positive regulation of interferon-beta production"/>
    <property type="evidence" value="ECO:0000250"/>
    <property type="project" value="UniProtKB"/>
</dbReference>
<dbReference type="GO" id="GO:0032755">
    <property type="term" value="P:positive regulation of interleukin-6 production"/>
    <property type="evidence" value="ECO:0000250"/>
    <property type="project" value="UniProtKB"/>
</dbReference>
<dbReference type="GO" id="GO:0060760">
    <property type="term" value="P:positive regulation of response to cytokine stimulus"/>
    <property type="evidence" value="ECO:0000250"/>
    <property type="project" value="UniProtKB"/>
</dbReference>
<dbReference type="GO" id="GO:0032760">
    <property type="term" value="P:positive regulation of tumor necrosis factor production"/>
    <property type="evidence" value="ECO:0000250"/>
    <property type="project" value="UniProtKB"/>
</dbReference>
<dbReference type="GO" id="GO:0051259">
    <property type="term" value="P:protein complex oligomerization"/>
    <property type="evidence" value="ECO:0000314"/>
    <property type="project" value="MGI"/>
</dbReference>
<dbReference type="GO" id="GO:0016925">
    <property type="term" value="P:protein sumoylation"/>
    <property type="evidence" value="ECO:0000250"/>
    <property type="project" value="UniProtKB"/>
</dbReference>
<dbReference type="GO" id="GO:0009615">
    <property type="term" value="P:response to virus"/>
    <property type="evidence" value="ECO:0000315"/>
    <property type="project" value="UniProtKB"/>
</dbReference>
<dbReference type="GO" id="GO:0060337">
    <property type="term" value="P:type I interferon-mediated signaling pathway"/>
    <property type="evidence" value="ECO:0000315"/>
    <property type="project" value="MGI"/>
</dbReference>
<dbReference type="CDD" id="cd15807">
    <property type="entry name" value="MDA5_C"/>
    <property type="match status" value="1"/>
</dbReference>
<dbReference type="CDD" id="cd12090">
    <property type="entry name" value="MDA5_ID"/>
    <property type="match status" value="1"/>
</dbReference>
<dbReference type="CDD" id="cd18802">
    <property type="entry name" value="SF2_C_dicer"/>
    <property type="match status" value="1"/>
</dbReference>
<dbReference type="FunFam" id="3.40.50.300:FF:000736">
    <property type="entry name" value="Interferon-induced helicase C domain-containing protein 1"/>
    <property type="match status" value="1"/>
</dbReference>
<dbReference type="FunFam" id="1.10.533.10:FF:000084">
    <property type="entry name" value="Interferon-induced with helicase C domain 1"/>
    <property type="match status" value="1"/>
</dbReference>
<dbReference type="FunFam" id="1.20.1320.30:FF:000001">
    <property type="entry name" value="Interferon-induced with helicase C domain 1"/>
    <property type="match status" value="1"/>
</dbReference>
<dbReference type="FunFam" id="2.170.150.30:FF:000002">
    <property type="entry name" value="Interferon-induced with helicase C domain 1"/>
    <property type="match status" value="1"/>
</dbReference>
<dbReference type="FunFam" id="3.40.50.300:FF:000893">
    <property type="entry name" value="Interferon-induced with helicase C domain 1"/>
    <property type="match status" value="1"/>
</dbReference>
<dbReference type="Gene3D" id="1.20.1320.30">
    <property type="match status" value="1"/>
</dbReference>
<dbReference type="Gene3D" id="1.10.533.10">
    <property type="entry name" value="Death Domain, Fas"/>
    <property type="match status" value="2"/>
</dbReference>
<dbReference type="Gene3D" id="3.40.50.300">
    <property type="entry name" value="P-loop containing nucleotide triphosphate hydrolases"/>
    <property type="match status" value="2"/>
</dbReference>
<dbReference type="Gene3D" id="2.170.150.30">
    <property type="entry name" value="RIG-I-like receptor, C-terminal regulatory domain"/>
    <property type="match status" value="1"/>
</dbReference>
<dbReference type="InterPro" id="IPR031964">
    <property type="entry name" value="CARD_dom"/>
</dbReference>
<dbReference type="InterPro" id="IPR011029">
    <property type="entry name" value="DEATH-like_dom_sf"/>
</dbReference>
<dbReference type="InterPro" id="IPR006935">
    <property type="entry name" value="Helicase/UvrB_N"/>
</dbReference>
<dbReference type="InterPro" id="IPR014001">
    <property type="entry name" value="Helicase_ATP-bd"/>
</dbReference>
<dbReference type="InterPro" id="IPR001650">
    <property type="entry name" value="Helicase_C-like"/>
</dbReference>
<dbReference type="InterPro" id="IPR027417">
    <property type="entry name" value="P-loop_NTPase"/>
</dbReference>
<dbReference type="InterPro" id="IPR041204">
    <property type="entry name" value="RIG-I-like_C"/>
</dbReference>
<dbReference type="InterPro" id="IPR038557">
    <property type="entry name" value="RLR_C_sf"/>
</dbReference>
<dbReference type="InterPro" id="IPR021673">
    <property type="entry name" value="RLR_CTR"/>
</dbReference>
<dbReference type="InterPro" id="IPR051363">
    <property type="entry name" value="RLR_Helicase"/>
</dbReference>
<dbReference type="PANTHER" id="PTHR14074">
    <property type="entry name" value="HELICASE WITH DEATH DOMAIN-RELATED"/>
    <property type="match status" value="1"/>
</dbReference>
<dbReference type="PANTHER" id="PTHR14074:SF14">
    <property type="entry name" value="INTERFERON-INDUCED HELICASE C DOMAIN-CONTAINING PROTEIN 1"/>
    <property type="match status" value="1"/>
</dbReference>
<dbReference type="Pfam" id="PF16739">
    <property type="entry name" value="CARD_2"/>
    <property type="match status" value="2"/>
</dbReference>
<dbReference type="Pfam" id="PF00271">
    <property type="entry name" value="Helicase_C"/>
    <property type="match status" value="1"/>
</dbReference>
<dbReference type="Pfam" id="PF04851">
    <property type="entry name" value="ResIII"/>
    <property type="match status" value="1"/>
</dbReference>
<dbReference type="Pfam" id="PF18119">
    <property type="entry name" value="RIG-I_C"/>
    <property type="match status" value="1"/>
</dbReference>
<dbReference type="Pfam" id="PF11648">
    <property type="entry name" value="RIG-I_C-RD"/>
    <property type="match status" value="1"/>
</dbReference>
<dbReference type="SMART" id="SM00487">
    <property type="entry name" value="DEXDc"/>
    <property type="match status" value="1"/>
</dbReference>
<dbReference type="SMART" id="SM00490">
    <property type="entry name" value="HELICc"/>
    <property type="match status" value="1"/>
</dbReference>
<dbReference type="SUPFAM" id="SSF47986">
    <property type="entry name" value="DEATH domain"/>
    <property type="match status" value="1"/>
</dbReference>
<dbReference type="SUPFAM" id="SSF52540">
    <property type="entry name" value="P-loop containing nucleoside triphosphate hydrolases"/>
    <property type="match status" value="1"/>
</dbReference>
<dbReference type="PROSITE" id="PS51192">
    <property type="entry name" value="HELICASE_ATP_BIND_1"/>
    <property type="match status" value="1"/>
</dbReference>
<dbReference type="PROSITE" id="PS51194">
    <property type="entry name" value="HELICASE_CTER"/>
    <property type="match status" value="1"/>
</dbReference>
<dbReference type="PROSITE" id="PS51789">
    <property type="entry name" value="RLR_CTR"/>
    <property type="match status" value="1"/>
</dbReference>
<sequence>MSIVCSAEDSFRNLILFFRPRLKMYIQVEPVLDHLIFLSAETKEQILKKINTCGNTSAAELLLSTLEQGQWPLGWTQMFVEALEHSGNPLAARYVKPTLTDLPSPSSETAHDECLHLLTLLQPTLVDKLLINDVLDTCFEKGLLTVEDRNRISAAGNSGNESGVRELLRRIVQKENWFSTFLDVLRQTGNDALFQELTGGGCPEDNTDLANSSHRDGPAANECLLPAVDESSLETEAWNVDDILPEASCTDSSVTTESDTSLAEGSVSCFDESLGHNSNMGRDSGTMGSDSDESVIQTKRVSPEPELQLRPYQMEVAQPALDGKNIIICLPTGSGKTRVAVYITKDHLDKKKQASESGKVIVLVNKVMLAEQLFRKEFNPYLKKWYRIIGLSGDTQLKISFPEVVKSYDVIISTAQILENSLLNLESGDDDGVQLSDFSLIIIDECHHTNKEAVYNNIMRRYLKQKLRNNDLKKQNKPAIPLPQILGLTASPGVGAAKKQSEAEKHILNICANLDAFTIKTVKENLGQLKHQIKEPCKKFVIADDTRENPFKEKLLEIMASIQTYCQKSPMSDFGTQHYEQWAIQMEKKAAKDGNRKDRVCAEHLRKYNEALQINDTIRMIDAYSHLETFYTDEKEKKFAVLNDSDKSDDEASSCNDQLKGDVKKSLKLDETDEFLMNLFFDNKKMLKKLAENPKYENEKLIKLRNTILEQFTRSEESSRGIIFTKTRQSTYALSQWIMENAKFAEVGVKAHHLIGAGHSSEVKPMTQTEQKEVISKFRTGEINLLIATTVAEEGLDIKECNIVIRYGLVTNEIAMVQARGRARADESTYVLVTSSGSGVTEREIVNDFREKMMYKAINRVQNMKPEEYAHKILELQVQSILEKKMKVKRSIAKQYNDNPSLITLLCKNCSMLVCSGENIHVIEKMHHVNMTPEFKGLYIVRENKALQKKFADYQTNGEIICKCGQAWGTMMVHKGLDLPCLKIRNFVVNFKNNSPKKQYKKWVELPIRFPDLDYSEYCLYSDED</sequence>
<proteinExistence type="evidence at protein level"/>
<gene>
    <name evidence="13" type="primary">Ifih1</name>
</gene>
<protein>
    <recommendedName>
        <fullName>Interferon-induced helicase C domain-containing protein 1</fullName>
        <ecNumber evidence="1">3.6.4.13</ecNumber>
    </recommendedName>
    <alternativeName>
        <fullName>Helicase with 2 CARD domains</fullName>
        <shortName>Helicard</shortName>
    </alternativeName>
    <alternativeName>
        <fullName>Interferon induced with helicase C domain protein 1</fullName>
    </alternativeName>
    <alternativeName>
        <fullName>Melanoma differentiation-associated protein 5</fullName>
        <shortName>MDA-5</shortName>
    </alternativeName>
    <alternativeName>
        <fullName>RIG-I-like receptor 2</fullName>
        <shortName>RLR-2</shortName>
    </alternativeName>
</protein>
<keyword id="KW-0002">3D-structure</keyword>
<keyword id="KW-0025">Alternative splicing</keyword>
<keyword id="KW-0051">Antiviral defense</keyword>
<keyword id="KW-0067">ATP-binding</keyword>
<keyword id="KW-0963">Cytoplasm</keyword>
<keyword id="KW-0347">Helicase</keyword>
<keyword id="KW-0378">Hydrolase</keyword>
<keyword id="KW-0391">Immunity</keyword>
<keyword id="KW-0399">Innate immunity</keyword>
<keyword id="KW-1017">Isopeptide bond</keyword>
<keyword id="KW-0479">Metal-binding</keyword>
<keyword id="KW-0496">Mitochondrion</keyword>
<keyword id="KW-0547">Nucleotide-binding</keyword>
<keyword id="KW-0539">Nucleus</keyword>
<keyword id="KW-0597">Phosphoprotein</keyword>
<keyword id="KW-1185">Reference proteome</keyword>
<keyword id="KW-0677">Repeat</keyword>
<keyword id="KW-0694">RNA-binding</keyword>
<keyword id="KW-0832">Ubl conjugation</keyword>
<keyword id="KW-0862">Zinc</keyword>
<name>IFIH1_MOUSE</name>